<organism>
    <name type="scientific">Listeria welshimeri serovar 6b (strain ATCC 35897 / DSM 20650 / CCUG 15529 / CIP 8149 / NCTC 11857 / SLCC 5334 / V8)</name>
    <dbReference type="NCBI Taxonomy" id="386043"/>
    <lineage>
        <taxon>Bacteria</taxon>
        <taxon>Bacillati</taxon>
        <taxon>Bacillota</taxon>
        <taxon>Bacilli</taxon>
        <taxon>Bacillales</taxon>
        <taxon>Listeriaceae</taxon>
        <taxon>Listeria</taxon>
    </lineage>
</organism>
<reference key="1">
    <citation type="journal article" date="2006" name="J. Bacteriol.">
        <title>Whole-genome sequence of Listeria welshimeri reveals common steps in genome reduction with Listeria innocua as compared to Listeria monocytogenes.</title>
        <authorList>
            <person name="Hain T."/>
            <person name="Steinweg C."/>
            <person name="Kuenne C.T."/>
            <person name="Billion A."/>
            <person name="Ghai R."/>
            <person name="Chatterjee S.S."/>
            <person name="Domann E."/>
            <person name="Kaerst U."/>
            <person name="Goesmann A."/>
            <person name="Bekel T."/>
            <person name="Bartels D."/>
            <person name="Kaiser O."/>
            <person name="Meyer F."/>
            <person name="Puehler A."/>
            <person name="Weisshaar B."/>
            <person name="Wehland J."/>
            <person name="Liang C."/>
            <person name="Dandekar T."/>
            <person name="Lampidis R."/>
            <person name="Kreft J."/>
            <person name="Goebel W."/>
            <person name="Chakraborty T."/>
        </authorList>
    </citation>
    <scope>NUCLEOTIDE SEQUENCE [LARGE SCALE GENOMIC DNA]</scope>
    <source>
        <strain>ATCC 35897 / DSM 20650 / CCUG 15529 / CIP 8149 / NCTC 11857 / SLCC 5334 / V8</strain>
    </source>
</reference>
<name>RPOC_LISW6</name>
<comment type="function">
    <text evidence="1">DNA-dependent RNA polymerase catalyzes the transcription of DNA into RNA using the four ribonucleoside triphosphates as substrates.</text>
</comment>
<comment type="catalytic activity">
    <reaction evidence="1">
        <text>RNA(n) + a ribonucleoside 5'-triphosphate = RNA(n+1) + diphosphate</text>
        <dbReference type="Rhea" id="RHEA:21248"/>
        <dbReference type="Rhea" id="RHEA-COMP:14527"/>
        <dbReference type="Rhea" id="RHEA-COMP:17342"/>
        <dbReference type="ChEBI" id="CHEBI:33019"/>
        <dbReference type="ChEBI" id="CHEBI:61557"/>
        <dbReference type="ChEBI" id="CHEBI:140395"/>
        <dbReference type="EC" id="2.7.7.6"/>
    </reaction>
</comment>
<comment type="cofactor">
    <cofactor evidence="1">
        <name>Mg(2+)</name>
        <dbReference type="ChEBI" id="CHEBI:18420"/>
    </cofactor>
    <text evidence="1">Binds 1 Mg(2+) ion per subunit.</text>
</comment>
<comment type="cofactor">
    <cofactor evidence="1">
        <name>Zn(2+)</name>
        <dbReference type="ChEBI" id="CHEBI:29105"/>
    </cofactor>
    <text evidence="1">Binds 2 Zn(2+) ions per subunit.</text>
</comment>
<comment type="subunit">
    <text evidence="1">The RNAP catalytic core consists of 2 alpha, 1 beta, 1 beta' and 1 omega subunit. When a sigma factor is associated with the core the holoenzyme is formed, which can initiate transcription.</text>
</comment>
<comment type="similarity">
    <text evidence="1">Belongs to the RNA polymerase beta' chain family.</text>
</comment>
<protein>
    <recommendedName>
        <fullName evidence="1">DNA-directed RNA polymerase subunit beta'</fullName>
        <shortName evidence="1">RNAP subunit beta'</shortName>
        <ecNumber evidence="1">2.7.7.6</ecNumber>
    </recommendedName>
    <alternativeName>
        <fullName evidence="1">RNA polymerase subunit beta'</fullName>
    </alternativeName>
    <alternativeName>
        <fullName evidence="1">Transcriptase subunit beta'</fullName>
    </alternativeName>
</protein>
<proteinExistence type="inferred from homology"/>
<feature type="chain" id="PRO_0000353388" description="DNA-directed RNA polymerase subunit beta'">
    <location>
        <begin position="1"/>
        <end position="1201"/>
    </location>
</feature>
<feature type="binding site" evidence="1">
    <location>
        <position position="60"/>
    </location>
    <ligand>
        <name>Zn(2+)</name>
        <dbReference type="ChEBI" id="CHEBI:29105"/>
        <label>1</label>
    </ligand>
</feature>
<feature type="binding site" evidence="1">
    <location>
        <position position="62"/>
    </location>
    <ligand>
        <name>Zn(2+)</name>
        <dbReference type="ChEBI" id="CHEBI:29105"/>
        <label>1</label>
    </ligand>
</feature>
<feature type="binding site" evidence="1">
    <location>
        <position position="75"/>
    </location>
    <ligand>
        <name>Zn(2+)</name>
        <dbReference type="ChEBI" id="CHEBI:29105"/>
        <label>1</label>
    </ligand>
</feature>
<feature type="binding site" evidence="1">
    <location>
        <position position="78"/>
    </location>
    <ligand>
        <name>Zn(2+)</name>
        <dbReference type="ChEBI" id="CHEBI:29105"/>
        <label>1</label>
    </ligand>
</feature>
<feature type="binding site" evidence="1">
    <location>
        <position position="449"/>
    </location>
    <ligand>
        <name>Mg(2+)</name>
        <dbReference type="ChEBI" id="CHEBI:18420"/>
    </ligand>
</feature>
<feature type="binding site" evidence="1">
    <location>
        <position position="451"/>
    </location>
    <ligand>
        <name>Mg(2+)</name>
        <dbReference type="ChEBI" id="CHEBI:18420"/>
    </ligand>
</feature>
<feature type="binding site" evidence="1">
    <location>
        <position position="453"/>
    </location>
    <ligand>
        <name>Mg(2+)</name>
        <dbReference type="ChEBI" id="CHEBI:18420"/>
    </ligand>
</feature>
<feature type="binding site" evidence="1">
    <location>
        <position position="818"/>
    </location>
    <ligand>
        <name>Zn(2+)</name>
        <dbReference type="ChEBI" id="CHEBI:29105"/>
        <label>2</label>
    </ligand>
</feature>
<feature type="binding site" evidence="1">
    <location>
        <position position="892"/>
    </location>
    <ligand>
        <name>Zn(2+)</name>
        <dbReference type="ChEBI" id="CHEBI:29105"/>
        <label>2</label>
    </ligand>
</feature>
<feature type="binding site" evidence="1">
    <location>
        <position position="899"/>
    </location>
    <ligand>
        <name>Zn(2+)</name>
        <dbReference type="ChEBI" id="CHEBI:29105"/>
        <label>2</label>
    </ligand>
</feature>
<feature type="binding site" evidence="1">
    <location>
        <position position="902"/>
    </location>
    <ligand>
        <name>Zn(2+)</name>
        <dbReference type="ChEBI" id="CHEBI:29105"/>
        <label>2</label>
    </ligand>
</feature>
<dbReference type="EC" id="2.7.7.6" evidence="1"/>
<dbReference type="EMBL" id="AM263198">
    <property type="protein sequence ID" value="CAK19646.1"/>
    <property type="molecule type" value="Genomic_DNA"/>
</dbReference>
<dbReference type="RefSeq" id="WP_011701087.1">
    <property type="nucleotide sequence ID" value="NC_008555.1"/>
</dbReference>
<dbReference type="SMR" id="A0AF64"/>
<dbReference type="STRING" id="386043.lwe0228"/>
<dbReference type="GeneID" id="61188121"/>
<dbReference type="KEGG" id="lwe:lwe0228"/>
<dbReference type="eggNOG" id="COG0086">
    <property type="taxonomic scope" value="Bacteria"/>
</dbReference>
<dbReference type="HOGENOM" id="CLU_000524_3_1_9"/>
<dbReference type="OrthoDB" id="9815296at2"/>
<dbReference type="Proteomes" id="UP000000779">
    <property type="component" value="Chromosome"/>
</dbReference>
<dbReference type="GO" id="GO:0000428">
    <property type="term" value="C:DNA-directed RNA polymerase complex"/>
    <property type="evidence" value="ECO:0007669"/>
    <property type="project" value="UniProtKB-KW"/>
</dbReference>
<dbReference type="GO" id="GO:0003677">
    <property type="term" value="F:DNA binding"/>
    <property type="evidence" value="ECO:0007669"/>
    <property type="project" value="UniProtKB-UniRule"/>
</dbReference>
<dbReference type="GO" id="GO:0003899">
    <property type="term" value="F:DNA-directed RNA polymerase activity"/>
    <property type="evidence" value="ECO:0007669"/>
    <property type="project" value="UniProtKB-UniRule"/>
</dbReference>
<dbReference type="GO" id="GO:0000287">
    <property type="term" value="F:magnesium ion binding"/>
    <property type="evidence" value="ECO:0007669"/>
    <property type="project" value="UniProtKB-UniRule"/>
</dbReference>
<dbReference type="GO" id="GO:0008270">
    <property type="term" value="F:zinc ion binding"/>
    <property type="evidence" value="ECO:0007669"/>
    <property type="project" value="UniProtKB-UniRule"/>
</dbReference>
<dbReference type="GO" id="GO:0006351">
    <property type="term" value="P:DNA-templated transcription"/>
    <property type="evidence" value="ECO:0007669"/>
    <property type="project" value="UniProtKB-UniRule"/>
</dbReference>
<dbReference type="CDD" id="cd02655">
    <property type="entry name" value="RNAP_beta'_C"/>
    <property type="match status" value="1"/>
</dbReference>
<dbReference type="CDD" id="cd01609">
    <property type="entry name" value="RNAP_beta'_N"/>
    <property type="match status" value="1"/>
</dbReference>
<dbReference type="FunFam" id="1.10.132.30:FF:000003">
    <property type="entry name" value="DNA-directed RNA polymerase subunit beta"/>
    <property type="match status" value="1"/>
</dbReference>
<dbReference type="FunFam" id="1.10.150.390:FF:000002">
    <property type="entry name" value="DNA-directed RNA polymerase subunit beta"/>
    <property type="match status" value="1"/>
</dbReference>
<dbReference type="FunFam" id="1.10.274.100:FF:000019">
    <property type="entry name" value="DNA-directed RNA polymerase subunit beta"/>
    <property type="match status" value="1"/>
</dbReference>
<dbReference type="FunFam" id="1.10.40.90:FF:000001">
    <property type="entry name" value="DNA-directed RNA polymerase subunit beta"/>
    <property type="match status" value="1"/>
</dbReference>
<dbReference type="FunFam" id="4.10.860.120:FF:000001">
    <property type="entry name" value="DNA-directed RNA polymerase subunit beta"/>
    <property type="match status" value="1"/>
</dbReference>
<dbReference type="Gene3D" id="1.10.132.30">
    <property type="match status" value="1"/>
</dbReference>
<dbReference type="Gene3D" id="1.10.150.390">
    <property type="match status" value="1"/>
</dbReference>
<dbReference type="Gene3D" id="1.10.1790.20">
    <property type="match status" value="1"/>
</dbReference>
<dbReference type="Gene3D" id="1.10.40.90">
    <property type="match status" value="1"/>
</dbReference>
<dbReference type="Gene3D" id="2.40.40.20">
    <property type="match status" value="1"/>
</dbReference>
<dbReference type="Gene3D" id="2.40.50.100">
    <property type="match status" value="1"/>
</dbReference>
<dbReference type="Gene3D" id="4.10.860.120">
    <property type="entry name" value="RNA polymerase II, clamp domain"/>
    <property type="match status" value="1"/>
</dbReference>
<dbReference type="Gene3D" id="1.10.274.100">
    <property type="entry name" value="RNA polymerase Rpb1, domain 3"/>
    <property type="match status" value="1"/>
</dbReference>
<dbReference type="HAMAP" id="MF_01322">
    <property type="entry name" value="RNApol_bact_RpoC"/>
    <property type="match status" value="1"/>
</dbReference>
<dbReference type="InterPro" id="IPR045867">
    <property type="entry name" value="DNA-dir_RpoC_beta_prime"/>
</dbReference>
<dbReference type="InterPro" id="IPR012754">
    <property type="entry name" value="DNA-dir_RpoC_beta_prime_bact"/>
</dbReference>
<dbReference type="InterPro" id="IPR000722">
    <property type="entry name" value="RNA_pol_asu"/>
</dbReference>
<dbReference type="InterPro" id="IPR006592">
    <property type="entry name" value="RNA_pol_N"/>
</dbReference>
<dbReference type="InterPro" id="IPR007080">
    <property type="entry name" value="RNA_pol_Rpb1_1"/>
</dbReference>
<dbReference type="InterPro" id="IPR007066">
    <property type="entry name" value="RNA_pol_Rpb1_3"/>
</dbReference>
<dbReference type="InterPro" id="IPR042102">
    <property type="entry name" value="RNA_pol_Rpb1_3_sf"/>
</dbReference>
<dbReference type="InterPro" id="IPR007083">
    <property type="entry name" value="RNA_pol_Rpb1_4"/>
</dbReference>
<dbReference type="InterPro" id="IPR007081">
    <property type="entry name" value="RNA_pol_Rpb1_5"/>
</dbReference>
<dbReference type="InterPro" id="IPR044893">
    <property type="entry name" value="RNA_pol_Rpb1_clamp_domain"/>
</dbReference>
<dbReference type="InterPro" id="IPR038120">
    <property type="entry name" value="Rpb1_funnel_sf"/>
</dbReference>
<dbReference type="NCBIfam" id="TIGR02386">
    <property type="entry name" value="rpoC_TIGR"/>
    <property type="match status" value="1"/>
</dbReference>
<dbReference type="PANTHER" id="PTHR19376">
    <property type="entry name" value="DNA-DIRECTED RNA POLYMERASE"/>
    <property type="match status" value="1"/>
</dbReference>
<dbReference type="PANTHER" id="PTHR19376:SF54">
    <property type="entry name" value="DNA-DIRECTED RNA POLYMERASE SUBUNIT BETA"/>
    <property type="match status" value="1"/>
</dbReference>
<dbReference type="Pfam" id="PF04997">
    <property type="entry name" value="RNA_pol_Rpb1_1"/>
    <property type="match status" value="1"/>
</dbReference>
<dbReference type="Pfam" id="PF00623">
    <property type="entry name" value="RNA_pol_Rpb1_2"/>
    <property type="match status" value="1"/>
</dbReference>
<dbReference type="Pfam" id="PF04983">
    <property type="entry name" value="RNA_pol_Rpb1_3"/>
    <property type="match status" value="1"/>
</dbReference>
<dbReference type="Pfam" id="PF05000">
    <property type="entry name" value="RNA_pol_Rpb1_4"/>
    <property type="match status" value="1"/>
</dbReference>
<dbReference type="Pfam" id="PF04998">
    <property type="entry name" value="RNA_pol_Rpb1_5"/>
    <property type="match status" value="1"/>
</dbReference>
<dbReference type="SMART" id="SM00663">
    <property type="entry name" value="RPOLA_N"/>
    <property type="match status" value="1"/>
</dbReference>
<dbReference type="SUPFAM" id="SSF64484">
    <property type="entry name" value="beta and beta-prime subunits of DNA dependent RNA-polymerase"/>
    <property type="match status" value="1"/>
</dbReference>
<gene>
    <name evidence="1" type="primary">rpoC</name>
    <name type="ordered locus">lwe0228</name>
</gene>
<keyword id="KW-0240">DNA-directed RNA polymerase</keyword>
<keyword id="KW-0460">Magnesium</keyword>
<keyword id="KW-0479">Metal-binding</keyword>
<keyword id="KW-0548">Nucleotidyltransferase</keyword>
<keyword id="KW-0804">Transcription</keyword>
<keyword id="KW-0808">Transferase</keyword>
<keyword id="KW-0862">Zinc</keyword>
<accession>A0AF64</accession>
<evidence type="ECO:0000255" key="1">
    <source>
        <dbReference type="HAMAP-Rule" id="MF_01322"/>
    </source>
</evidence>
<sequence length="1201" mass="134845">MLDVNNFEYMKIGLASPDKIRSWSHGEVKKPETINYRTLKPERDGLFCERIFGPMKDWECSCGKYKRVRYKGVVCDRCGVEVTKSKVRRERMGHIELAAPVSHIWYFKGIPSRMGLVMDMSPRALEEIIYFASYVVTEPGDTPLEKKQLLSEREYRVYREKYGKGFSAGMGAEAIKKILSDIDLEKETNDLKEELKSAQGQRRTRAIRRLEVMEAFRNSGNNPSWMVLDVLPVIPPEIRPMVQLEGGRFATSDLNDLYRRVINRNNRLKRLLDLGAPNIIVQNEKRMLQEAVDALIDNGRRGRPVTGPGNRPLKSLSHMLKGKQGRFRQNLLGKRVDYSGRSVIVVGPNLKMYQCGLPKEMALELFKPFVMKELVGRGLAHNIKSAKRKIERMSPEIWDVLEEVIREHPVLLNRAPTLHRLGIQAFEPTLVEGRAIRLHPLVCTAYNADFDGDQMAVHVPLSAEAQAEARILMLAAQNILNPKDGKPVVTPSQDMVLGNYYLTLERENAVGEGTIFKDINEAQLAYQNGYVHLHSRIAVFAGSIPNERFTDEQRNQLLITTVGKLIFNTILPKSFPYINEPTKFNLEIETPSKYFVDTTTDVRAHIAAQELIDPFKKKILGNIIAEVFKKFHITETSKMLDRMKDLGFKISTKAGMTVGIADILTLEEKHEILEKAHDTVEKITKSFRRGLITDDERYERVIAVWNAAKDEIQGKLILSLDRLNPIFMMQDSGARGNISNFTQLAGMRGLMADPSGRIVELPITSNFREGLTVLEYFISTHGARKGLTDTALKTADSGYLTRRLVDVAQDVIIREDDCGTDRGLTIKAIREGTEIIEPLEERLEGRYSRKTIRHPETKEVIARENDLITEAIATQIVEAGIEEVTIRSAFTCNTKHGVCKKCYGKNLATGTEVEVGEAVGIIAAQSIGEPGTQLTMRTFHTGGVAGDDITQGLPRIQEIFEARNPKGQAIITEVGGEVVSIEEGRDRQQEITIQGTDDRRSYNIPYTARLRVEEGTIVERGEALTEGSVDPKALIRVRDVLSVQEYLLAEVQKVYRMQGVEIGDKHVEVMVRQMLRKIRVMDTGDTNILPGTLMDIHTFTEANREAILSGSQPATGRPVLLGITKASLETDSFLSAASFQETTRVLTDAAIKGKRDELLGLKENVILGKLVPAGTGIGRYRKLKSEVIKETAEVTDEITNI</sequence>